<organism>
    <name type="scientific">Schizosaccharomyces pombe (strain 972 / ATCC 24843)</name>
    <name type="common">Fission yeast</name>
    <dbReference type="NCBI Taxonomy" id="284812"/>
    <lineage>
        <taxon>Eukaryota</taxon>
        <taxon>Fungi</taxon>
        <taxon>Dikarya</taxon>
        <taxon>Ascomycota</taxon>
        <taxon>Taphrinomycotina</taxon>
        <taxon>Schizosaccharomycetes</taxon>
        <taxon>Schizosaccharomycetales</taxon>
        <taxon>Schizosaccharomycetaceae</taxon>
        <taxon>Schizosaccharomyces</taxon>
    </lineage>
</organism>
<protein>
    <recommendedName>
        <fullName>RNA polymerase II transcription factor B subunit 3</fullName>
    </recommendedName>
    <alternativeName>
        <fullName>CDK-activating kinase assembly factor MAT1 homolog</fullName>
    </alternativeName>
    <alternativeName>
        <fullName>RING finger protein pmh1</fullName>
    </alternativeName>
    <alternativeName>
        <fullName>RNA polymerase II transcription factor B 38 kDa subunit</fullName>
    </alternativeName>
    <alternativeName>
        <fullName>RNA polymerase II transcription factor B p38 subunit</fullName>
    </alternativeName>
</protein>
<gene>
    <name type="primary">pmh1</name>
    <name type="synonym">mcr1</name>
    <name type="synonym">tfb3</name>
    <name type="ORF">SPBC776.18c</name>
</gene>
<name>TFB3_SCHPO</name>
<comment type="function">
    <text evidence="1">Acts as a component of the general transcription and DNA repair factor IIH (TFIIH or factor B), which is essential for both basal and activated transcription, and is involved in nucleotide excision repair (NER) of damaged DNA. TFIIH has CTD kinase activity and DNA-dependent ATPase activity, and is essential for polymerase II transcription (By similarity).</text>
</comment>
<comment type="subunit">
    <text evidence="3 4">One of the nine subunits forming the core-TFIIH basal transcription factor. Also interacts with skp1 and with the mcs2-mcs6 complex.</text>
</comment>
<comment type="interaction">
    <interactant intactId="EBI-1168961">
        <id>O94684</id>
    </interactant>
    <interactant intactId="EBI-1172248">
        <id>Q9Y709</id>
        <label>skp1</label>
    </interactant>
    <organismsDiffer>false</organismsDiffer>
    <experiments>3</experiments>
</comment>
<comment type="subcellular location">
    <subcellularLocation>
        <location evidence="5">Cytoplasm</location>
    </subcellularLocation>
    <subcellularLocation>
        <location evidence="5">Nucleus</location>
    </subcellularLocation>
</comment>
<evidence type="ECO:0000250" key="1"/>
<evidence type="ECO:0000255" key="2">
    <source>
        <dbReference type="PROSITE-ProRule" id="PRU00175"/>
    </source>
</evidence>
<evidence type="ECO:0000269" key="3">
    <source>
    </source>
</evidence>
<evidence type="ECO:0000269" key="4">
    <source>
    </source>
</evidence>
<evidence type="ECO:0000269" key="5">
    <source>
    </source>
</evidence>
<feature type="chain" id="PRO_0000055940" description="RNA polymerase II transcription factor B subunit 3">
    <location>
        <begin position="1"/>
        <end position="318"/>
    </location>
</feature>
<feature type="zinc finger region" description="RING-type" evidence="2">
    <location>
        <begin position="13"/>
        <end position="54"/>
    </location>
</feature>
<sequence length="318" mass="36674">MDDEGARKVDEKCPLCQADRYLNPNMKLLINPECYHKMCESCVDRIFTTGPAQCPTPGCNKILRKAKFREQTFEDAQIEREVDVRKRISRIFNKGQQEFDSLQAYNDYLEEVEILTFNLIYKIDVEETEEKVKQYEKQNRDSIAANSARAAAEARILAQNEILLKRQKQEAREAAIREHQKEKERREQVEQQIIFDLATSGKDPNKIIQLSDSLKKQQENIASSVSNISRSSSILLSDVQQVAEDTTPFSPLAGEKDGSKYFSYSKNTYQDLYLEKVSHEPGRKCGFRIEDCHLRCLYEAFSGIDYDLESLKKLEVAS</sequence>
<keyword id="KW-0963">Cytoplasm</keyword>
<keyword id="KW-0227">DNA damage</keyword>
<keyword id="KW-0234">DNA repair</keyword>
<keyword id="KW-0479">Metal-binding</keyword>
<keyword id="KW-0539">Nucleus</keyword>
<keyword id="KW-1185">Reference proteome</keyword>
<keyword id="KW-0804">Transcription</keyword>
<keyword id="KW-0805">Transcription regulation</keyword>
<keyword id="KW-0862">Zinc</keyword>
<keyword id="KW-0863">Zinc-finger</keyword>
<proteinExistence type="evidence at protein level"/>
<accession>O94684</accession>
<dbReference type="EMBL" id="AF191500">
    <property type="protein sequence ID" value="AAF05735.1"/>
    <property type="molecule type" value="Genomic_DNA"/>
</dbReference>
<dbReference type="EMBL" id="CU329671">
    <property type="protein sequence ID" value="CAA22891.1"/>
    <property type="molecule type" value="Genomic_DNA"/>
</dbReference>
<dbReference type="PIR" id="T40689">
    <property type="entry name" value="T40689"/>
</dbReference>
<dbReference type="RefSeq" id="NP_596334.1">
    <property type="nucleotide sequence ID" value="NM_001022255.2"/>
</dbReference>
<dbReference type="SMR" id="O94684"/>
<dbReference type="BioGRID" id="277209">
    <property type="interactions" value="6"/>
</dbReference>
<dbReference type="FunCoup" id="O94684">
    <property type="interactions" value="352"/>
</dbReference>
<dbReference type="IntAct" id="O94684">
    <property type="interactions" value="4"/>
</dbReference>
<dbReference type="MINT" id="O94684"/>
<dbReference type="STRING" id="284812.O94684"/>
<dbReference type="iPTMnet" id="O94684"/>
<dbReference type="PaxDb" id="4896-SPBC776.18c.1"/>
<dbReference type="EnsemblFungi" id="SPBC776.18c.1">
    <property type="protein sequence ID" value="SPBC776.18c.1:pep"/>
    <property type="gene ID" value="SPBC776.18c"/>
</dbReference>
<dbReference type="GeneID" id="2540684"/>
<dbReference type="KEGG" id="spo:2540684"/>
<dbReference type="PomBase" id="SPBC776.18c">
    <property type="gene designation" value="pmh1"/>
</dbReference>
<dbReference type="VEuPathDB" id="FungiDB:SPBC776.18c"/>
<dbReference type="eggNOG" id="KOG3800">
    <property type="taxonomic scope" value="Eukaryota"/>
</dbReference>
<dbReference type="HOGENOM" id="CLU_048466_1_0_1"/>
<dbReference type="InParanoid" id="O94684"/>
<dbReference type="OMA" id="PNKRDYY"/>
<dbReference type="PhylomeDB" id="O94684"/>
<dbReference type="Reactome" id="R-SPO-113418">
    <property type="pathway name" value="Formation of the Early Elongation Complex"/>
</dbReference>
<dbReference type="Reactome" id="R-SPO-5696395">
    <property type="pathway name" value="Formation of Incision Complex in GG-NER"/>
</dbReference>
<dbReference type="Reactome" id="R-SPO-674695">
    <property type="pathway name" value="RNA Polymerase II Pre-transcription Events"/>
</dbReference>
<dbReference type="Reactome" id="R-SPO-6781823">
    <property type="pathway name" value="Formation of TC-NER Pre-Incision Complex"/>
</dbReference>
<dbReference type="Reactome" id="R-SPO-6782135">
    <property type="pathway name" value="Dual incision in TC-NER"/>
</dbReference>
<dbReference type="Reactome" id="R-SPO-6782210">
    <property type="pathway name" value="Gap-filling DNA repair synthesis and ligation in TC-NER"/>
</dbReference>
<dbReference type="Reactome" id="R-SPO-6796648">
    <property type="pathway name" value="TP53 Regulates Transcription of DNA Repair Genes"/>
</dbReference>
<dbReference type="Reactome" id="R-SPO-69231">
    <property type="pathway name" value="Cyclin D associated events in G1"/>
</dbReference>
<dbReference type="Reactome" id="R-SPO-69656">
    <property type="pathway name" value="Cyclin A:Cdk2-associated events at S phase entry"/>
</dbReference>
<dbReference type="Reactome" id="R-SPO-72086">
    <property type="pathway name" value="mRNA Capping"/>
</dbReference>
<dbReference type="Reactome" id="R-SPO-73772">
    <property type="pathway name" value="RNA Polymerase I Promoter Escape"/>
</dbReference>
<dbReference type="Reactome" id="R-SPO-73776">
    <property type="pathway name" value="RNA Polymerase II Promoter Escape"/>
</dbReference>
<dbReference type="Reactome" id="R-SPO-73779">
    <property type="pathway name" value="RNA Polymerase II Transcription Pre-Initiation And Promoter Opening"/>
</dbReference>
<dbReference type="Reactome" id="R-SPO-75953">
    <property type="pathway name" value="RNA Polymerase II Transcription Initiation"/>
</dbReference>
<dbReference type="Reactome" id="R-SPO-76042">
    <property type="pathway name" value="RNA Polymerase II Transcription Initiation And Promoter Clearance"/>
</dbReference>
<dbReference type="Reactome" id="R-SPO-77075">
    <property type="pathway name" value="RNA Pol II CTD phosphorylation and interaction with CE"/>
</dbReference>
<dbReference type="PRO" id="PR:O94684"/>
<dbReference type="Proteomes" id="UP000002485">
    <property type="component" value="Chromosome II"/>
</dbReference>
<dbReference type="GO" id="GO:0005829">
    <property type="term" value="C:cytosol"/>
    <property type="evidence" value="ECO:0007005"/>
    <property type="project" value="PomBase"/>
</dbReference>
<dbReference type="GO" id="GO:0000112">
    <property type="term" value="C:nucleotide-excision repair factor 3 complex"/>
    <property type="evidence" value="ECO:0000266"/>
    <property type="project" value="PomBase"/>
</dbReference>
<dbReference type="GO" id="GO:0005634">
    <property type="term" value="C:nucleus"/>
    <property type="evidence" value="ECO:0007005"/>
    <property type="project" value="PomBase"/>
</dbReference>
<dbReference type="GO" id="GO:0005675">
    <property type="term" value="C:transcription factor TFIIH holo complex"/>
    <property type="evidence" value="ECO:0000318"/>
    <property type="project" value="GO_Central"/>
</dbReference>
<dbReference type="GO" id="GO:0070985">
    <property type="term" value="C:transcription factor TFIIK complex"/>
    <property type="evidence" value="ECO:0000314"/>
    <property type="project" value="PomBase"/>
</dbReference>
<dbReference type="GO" id="GO:0061575">
    <property type="term" value="F:cyclin-dependent protein serine/threonine kinase activator activity"/>
    <property type="evidence" value="ECO:0000314"/>
    <property type="project" value="PomBase"/>
</dbReference>
<dbReference type="GO" id="GO:0016251">
    <property type="term" value="F:RNA polymerase II general transcription initiation factor activity"/>
    <property type="evidence" value="ECO:0000305"/>
    <property type="project" value="PomBase"/>
</dbReference>
<dbReference type="GO" id="GO:0061630">
    <property type="term" value="F:ubiquitin protein ligase activity"/>
    <property type="evidence" value="ECO:0000255"/>
    <property type="project" value="PomBase"/>
</dbReference>
<dbReference type="GO" id="GO:0008270">
    <property type="term" value="F:zinc ion binding"/>
    <property type="evidence" value="ECO:0000255"/>
    <property type="project" value="PomBase"/>
</dbReference>
<dbReference type="GO" id="GO:0006281">
    <property type="term" value="P:DNA repair"/>
    <property type="evidence" value="ECO:0000318"/>
    <property type="project" value="GO_Central"/>
</dbReference>
<dbReference type="GO" id="GO:0006289">
    <property type="term" value="P:nucleotide-excision repair"/>
    <property type="evidence" value="ECO:0000266"/>
    <property type="project" value="PomBase"/>
</dbReference>
<dbReference type="GO" id="GO:0006357">
    <property type="term" value="P:regulation of transcription by RNA polymerase II"/>
    <property type="evidence" value="ECO:0000318"/>
    <property type="project" value="GO_Central"/>
</dbReference>
<dbReference type="GO" id="GO:0006367">
    <property type="term" value="P:transcription initiation at RNA polymerase II promoter"/>
    <property type="evidence" value="ECO:0000305"/>
    <property type="project" value="PomBase"/>
</dbReference>
<dbReference type="CDD" id="cd16573">
    <property type="entry name" value="RING-HC_TFB3-like"/>
    <property type="match status" value="1"/>
</dbReference>
<dbReference type="FunFam" id="3.30.40.10:FF:000037">
    <property type="entry name" value="Cdk-activating kinase assembly factor MAT1, centre"/>
    <property type="match status" value="1"/>
</dbReference>
<dbReference type="Gene3D" id="3.30.40.10">
    <property type="entry name" value="Zinc/RING finger domain, C3HC4 (zinc finger)"/>
    <property type="match status" value="1"/>
</dbReference>
<dbReference type="InterPro" id="IPR015877">
    <property type="entry name" value="Cdk-activating_kinase_MAT1_cen"/>
</dbReference>
<dbReference type="InterPro" id="IPR004575">
    <property type="entry name" value="MAT1/Tfb3"/>
</dbReference>
<dbReference type="InterPro" id="IPR001841">
    <property type="entry name" value="Znf_RING"/>
</dbReference>
<dbReference type="InterPro" id="IPR013083">
    <property type="entry name" value="Znf_RING/FYVE/PHD"/>
</dbReference>
<dbReference type="InterPro" id="IPR017907">
    <property type="entry name" value="Znf_RING_CS"/>
</dbReference>
<dbReference type="NCBIfam" id="TIGR00570">
    <property type="entry name" value="cdk7"/>
    <property type="match status" value="1"/>
</dbReference>
<dbReference type="PANTHER" id="PTHR12683">
    <property type="entry name" value="CDK-ACTIVATING KINASE ASSEMBLY FACTOR MAT1"/>
    <property type="match status" value="1"/>
</dbReference>
<dbReference type="PANTHER" id="PTHR12683:SF13">
    <property type="entry name" value="CDK-ACTIVATING KINASE ASSEMBLY FACTOR MAT1"/>
    <property type="match status" value="1"/>
</dbReference>
<dbReference type="Pfam" id="PF06391">
    <property type="entry name" value="MAT1"/>
    <property type="match status" value="1"/>
</dbReference>
<dbReference type="Pfam" id="PF17121">
    <property type="entry name" value="zf-C3HC4_5"/>
    <property type="match status" value="1"/>
</dbReference>
<dbReference type="PIRSF" id="PIRSF003338">
    <property type="entry name" value="MAT1_metazoa"/>
    <property type="match status" value="1"/>
</dbReference>
<dbReference type="SUPFAM" id="SSF57850">
    <property type="entry name" value="RING/U-box"/>
    <property type="match status" value="1"/>
</dbReference>
<dbReference type="PROSITE" id="PS00518">
    <property type="entry name" value="ZF_RING_1"/>
    <property type="match status" value="1"/>
</dbReference>
<dbReference type="PROSITE" id="PS50089">
    <property type="entry name" value="ZF_RING_2"/>
    <property type="match status" value="1"/>
</dbReference>
<reference key="1">
    <citation type="journal article" date="2004" name="Biochem. Biophys. Res. Commun.">
        <title>Mcs2 and a novel CAK subunit Pmh1 associate with Skp1 in fission yeast.</title>
        <authorList>
            <person name="Bamps S."/>
            <person name="Westerling T."/>
            <person name="Pihlak A."/>
            <person name="Tafforeau L."/>
            <person name="Vandenhaute J."/>
            <person name="Maekelae T.P."/>
            <person name="Hermand D."/>
        </authorList>
    </citation>
    <scope>NUCLEOTIDE SEQUENCE [GENOMIC DNA]</scope>
    <scope>INTERACTION WITH SKP1; MCS2 AND MCS6</scope>
    <source>
        <strain>972 / ATCC 24843</strain>
    </source>
</reference>
<reference key="2">
    <citation type="journal article" date="2002" name="Nature">
        <title>The genome sequence of Schizosaccharomyces pombe.</title>
        <authorList>
            <person name="Wood V."/>
            <person name="Gwilliam R."/>
            <person name="Rajandream M.A."/>
            <person name="Lyne M.H."/>
            <person name="Lyne R."/>
            <person name="Stewart A."/>
            <person name="Sgouros J.G."/>
            <person name="Peat N."/>
            <person name="Hayles J."/>
            <person name="Baker S.G."/>
            <person name="Basham D."/>
            <person name="Bowman S."/>
            <person name="Brooks K."/>
            <person name="Brown D."/>
            <person name="Brown S."/>
            <person name="Chillingworth T."/>
            <person name="Churcher C.M."/>
            <person name="Collins M."/>
            <person name="Connor R."/>
            <person name="Cronin A."/>
            <person name="Davis P."/>
            <person name="Feltwell T."/>
            <person name="Fraser A."/>
            <person name="Gentles S."/>
            <person name="Goble A."/>
            <person name="Hamlin N."/>
            <person name="Harris D.E."/>
            <person name="Hidalgo J."/>
            <person name="Hodgson G."/>
            <person name="Holroyd S."/>
            <person name="Hornsby T."/>
            <person name="Howarth S."/>
            <person name="Huckle E.J."/>
            <person name="Hunt S."/>
            <person name="Jagels K."/>
            <person name="James K.D."/>
            <person name="Jones L."/>
            <person name="Jones M."/>
            <person name="Leather S."/>
            <person name="McDonald S."/>
            <person name="McLean J."/>
            <person name="Mooney P."/>
            <person name="Moule S."/>
            <person name="Mungall K.L."/>
            <person name="Murphy L.D."/>
            <person name="Niblett D."/>
            <person name="Odell C."/>
            <person name="Oliver K."/>
            <person name="O'Neil S."/>
            <person name="Pearson D."/>
            <person name="Quail M.A."/>
            <person name="Rabbinowitsch E."/>
            <person name="Rutherford K.M."/>
            <person name="Rutter S."/>
            <person name="Saunders D."/>
            <person name="Seeger K."/>
            <person name="Sharp S."/>
            <person name="Skelton J."/>
            <person name="Simmonds M.N."/>
            <person name="Squares R."/>
            <person name="Squares S."/>
            <person name="Stevens K."/>
            <person name="Taylor K."/>
            <person name="Taylor R.G."/>
            <person name="Tivey A."/>
            <person name="Walsh S.V."/>
            <person name="Warren T."/>
            <person name="Whitehead S."/>
            <person name="Woodward J.R."/>
            <person name="Volckaert G."/>
            <person name="Aert R."/>
            <person name="Robben J."/>
            <person name="Grymonprez B."/>
            <person name="Weltjens I."/>
            <person name="Vanstreels E."/>
            <person name="Rieger M."/>
            <person name="Schaefer M."/>
            <person name="Mueller-Auer S."/>
            <person name="Gabel C."/>
            <person name="Fuchs M."/>
            <person name="Duesterhoeft A."/>
            <person name="Fritzc C."/>
            <person name="Holzer E."/>
            <person name="Moestl D."/>
            <person name="Hilbert H."/>
            <person name="Borzym K."/>
            <person name="Langer I."/>
            <person name="Beck A."/>
            <person name="Lehrach H."/>
            <person name="Reinhardt R."/>
            <person name="Pohl T.M."/>
            <person name="Eger P."/>
            <person name="Zimmermann W."/>
            <person name="Wedler H."/>
            <person name="Wambutt R."/>
            <person name="Purnelle B."/>
            <person name="Goffeau A."/>
            <person name="Cadieu E."/>
            <person name="Dreano S."/>
            <person name="Gloux S."/>
            <person name="Lelaure V."/>
            <person name="Mottier S."/>
            <person name="Galibert F."/>
            <person name="Aves S.J."/>
            <person name="Xiang Z."/>
            <person name="Hunt C."/>
            <person name="Moore K."/>
            <person name="Hurst S.M."/>
            <person name="Lucas M."/>
            <person name="Rochet M."/>
            <person name="Gaillardin C."/>
            <person name="Tallada V.A."/>
            <person name="Garzon A."/>
            <person name="Thode G."/>
            <person name="Daga R.R."/>
            <person name="Cruzado L."/>
            <person name="Jimenez J."/>
            <person name="Sanchez M."/>
            <person name="del Rey F."/>
            <person name="Benito J."/>
            <person name="Dominguez A."/>
            <person name="Revuelta J.L."/>
            <person name="Moreno S."/>
            <person name="Armstrong J."/>
            <person name="Forsburg S.L."/>
            <person name="Cerutti L."/>
            <person name="Lowe T."/>
            <person name="McCombie W.R."/>
            <person name="Paulsen I."/>
            <person name="Potashkin J."/>
            <person name="Shpakovski G.V."/>
            <person name="Ussery D."/>
            <person name="Barrell B.G."/>
            <person name="Nurse P."/>
        </authorList>
    </citation>
    <scope>NUCLEOTIDE SEQUENCE [LARGE SCALE GENOMIC DNA]</scope>
    <source>
        <strain>972 / ATCC 24843</strain>
    </source>
</reference>
<reference key="3">
    <citation type="journal article" date="2003" name="J. Biol. Chem.">
        <title>Mediator influences Schizosaccharomyces pombe RNA polymerase II-dependent transcription in vitro.</title>
        <authorList>
            <person name="Spaehr H."/>
            <person name="Khorosjutina O."/>
            <person name="Baraznenok V."/>
            <person name="Linder T."/>
            <person name="Samuelsen C.O."/>
            <person name="Hermand D."/>
            <person name="Maekelae T.P."/>
            <person name="Holmberg S."/>
            <person name="Gustafsson C.M."/>
        </authorList>
    </citation>
    <scope>SUBUNIT</scope>
</reference>
<reference key="4">
    <citation type="journal article" date="2006" name="Nat. Biotechnol.">
        <title>ORFeome cloning and global analysis of protein localization in the fission yeast Schizosaccharomyces pombe.</title>
        <authorList>
            <person name="Matsuyama A."/>
            <person name="Arai R."/>
            <person name="Yashiroda Y."/>
            <person name="Shirai A."/>
            <person name="Kamata A."/>
            <person name="Sekido S."/>
            <person name="Kobayashi Y."/>
            <person name="Hashimoto A."/>
            <person name="Hamamoto M."/>
            <person name="Hiraoka Y."/>
            <person name="Horinouchi S."/>
            <person name="Yoshida M."/>
        </authorList>
    </citation>
    <scope>SUBCELLULAR LOCATION [LARGE SCALE ANALYSIS]</scope>
</reference>